<comment type="function">
    <text evidence="2">Catalyzes the hydrolysis of queuosine 5'-phosphate, releasing the nucleobase queuine (q). Is required for salvage of queuine from exogenous queuosine (Q) that is imported and then converted to queuosine 5'-phosphate intracellularly.</text>
</comment>
<comment type="catalytic activity">
    <reaction evidence="2">
        <text>queuosine 5'-phosphate + H2O = queuine + D-ribose 5-phosphate</text>
        <dbReference type="Rhea" id="RHEA:75387"/>
        <dbReference type="ChEBI" id="CHEBI:15377"/>
        <dbReference type="ChEBI" id="CHEBI:17433"/>
        <dbReference type="ChEBI" id="CHEBI:78346"/>
        <dbReference type="ChEBI" id="CHEBI:194371"/>
    </reaction>
    <physiologicalReaction direction="left-to-right" evidence="2">
        <dbReference type="Rhea" id="RHEA:75388"/>
    </physiologicalReaction>
</comment>
<comment type="miscellaneous">
    <text evidence="2">Eukaryotes lack the canonical genes for de novo biosynthesis of queuosine (Q), present in most bacteria. Therefore, this molecule must be sourced from ingested food and/or the gut microbiota, and metabolized to its corresponding nucleobase, queuine (q), before incorporation into cytoplasmic and mitochondrial tRNAs. Incorporation of q into the anticodon of some tRNAs contributes to translational efficiency and accuracy.</text>
</comment>
<comment type="similarity">
    <text evidence="3">Belongs to the QNG1 protein family.</text>
</comment>
<name>QNG1_DICDI</name>
<gene>
    <name type="ORF">DDB_G0288723</name>
</gene>
<accession>Q54II8</accession>
<keyword id="KW-0378">Hydrolase</keyword>
<keyword id="KW-1185">Reference proteome</keyword>
<sequence>MNPLTLVRETTAWVSGLSKHVKINNEALDKECEDFLNKHKIKAHKEIWADNWFHYCDIDIENKESTFTELTAKYILVLDTLNFCFWPDSEFEYHHLARGLKNALIANPKCFDADQLIKVTSETIHQWFGKDLPNTSERVRLIREVGTVLIEYFNGSIKEMILSANNKASVLVDLVTKYFWGFRDSAIYKGKQVFFYKRAQIFVGDLWGAYQGRGLGKFDDIKQLTMFADYRVPQILEELKVIEYSPELKEMIKNKVEIPVGSEMELEIRAVTVHVVEKMRDYFNKGHCELLALEIDWMLWGRGEAMLDKLPPHHRTLTIFY</sequence>
<protein>
    <recommendedName>
        <fullName evidence="2">Queuosine 5'-phosphate N-glycosylase/hydrolase</fullName>
        <ecNumber evidence="2">3.2.2.-</ecNumber>
    </recommendedName>
    <alternativeName>
        <fullName evidence="2">Queuosine-nucleotide N-glycosylase/hydrolase</fullName>
    </alternativeName>
</protein>
<reference key="1">
    <citation type="journal article" date="2005" name="Nature">
        <title>The genome of the social amoeba Dictyostelium discoideum.</title>
        <authorList>
            <person name="Eichinger L."/>
            <person name="Pachebat J.A."/>
            <person name="Gloeckner G."/>
            <person name="Rajandream M.A."/>
            <person name="Sucgang R."/>
            <person name="Berriman M."/>
            <person name="Song J."/>
            <person name="Olsen R."/>
            <person name="Szafranski K."/>
            <person name="Xu Q."/>
            <person name="Tunggal B."/>
            <person name="Kummerfeld S."/>
            <person name="Madera M."/>
            <person name="Konfortov B.A."/>
            <person name="Rivero F."/>
            <person name="Bankier A.T."/>
            <person name="Lehmann R."/>
            <person name="Hamlin N."/>
            <person name="Davies R."/>
            <person name="Gaudet P."/>
            <person name="Fey P."/>
            <person name="Pilcher K."/>
            <person name="Chen G."/>
            <person name="Saunders D."/>
            <person name="Sodergren E.J."/>
            <person name="Davis P."/>
            <person name="Kerhornou A."/>
            <person name="Nie X."/>
            <person name="Hall N."/>
            <person name="Anjard C."/>
            <person name="Hemphill L."/>
            <person name="Bason N."/>
            <person name="Farbrother P."/>
            <person name="Desany B."/>
            <person name="Just E."/>
            <person name="Morio T."/>
            <person name="Rost R."/>
            <person name="Churcher C.M."/>
            <person name="Cooper J."/>
            <person name="Haydock S."/>
            <person name="van Driessche N."/>
            <person name="Cronin A."/>
            <person name="Goodhead I."/>
            <person name="Muzny D.M."/>
            <person name="Mourier T."/>
            <person name="Pain A."/>
            <person name="Lu M."/>
            <person name="Harper D."/>
            <person name="Lindsay R."/>
            <person name="Hauser H."/>
            <person name="James K.D."/>
            <person name="Quiles M."/>
            <person name="Madan Babu M."/>
            <person name="Saito T."/>
            <person name="Buchrieser C."/>
            <person name="Wardroper A."/>
            <person name="Felder M."/>
            <person name="Thangavelu M."/>
            <person name="Johnson D."/>
            <person name="Knights A."/>
            <person name="Loulseged H."/>
            <person name="Mungall K.L."/>
            <person name="Oliver K."/>
            <person name="Price C."/>
            <person name="Quail M.A."/>
            <person name="Urushihara H."/>
            <person name="Hernandez J."/>
            <person name="Rabbinowitsch E."/>
            <person name="Steffen D."/>
            <person name="Sanders M."/>
            <person name="Ma J."/>
            <person name="Kohara Y."/>
            <person name="Sharp S."/>
            <person name="Simmonds M.N."/>
            <person name="Spiegler S."/>
            <person name="Tivey A."/>
            <person name="Sugano S."/>
            <person name="White B."/>
            <person name="Walker D."/>
            <person name="Woodward J.R."/>
            <person name="Winckler T."/>
            <person name="Tanaka Y."/>
            <person name="Shaulsky G."/>
            <person name="Schleicher M."/>
            <person name="Weinstock G.M."/>
            <person name="Rosenthal A."/>
            <person name="Cox E.C."/>
            <person name="Chisholm R.L."/>
            <person name="Gibbs R.A."/>
            <person name="Loomis W.F."/>
            <person name="Platzer M."/>
            <person name="Kay R.R."/>
            <person name="Williams J.G."/>
            <person name="Dear P.H."/>
            <person name="Noegel A.A."/>
            <person name="Barrell B.G."/>
            <person name="Kuspa A."/>
        </authorList>
    </citation>
    <scope>NUCLEOTIDE SEQUENCE [LARGE SCALE GENOMIC DNA]</scope>
    <source>
        <strain>AX4</strain>
    </source>
</reference>
<evidence type="ECO:0000250" key="1">
    <source>
        <dbReference type="UniProtKB" id="D1C7A6"/>
    </source>
</evidence>
<evidence type="ECO:0000250" key="2">
    <source>
        <dbReference type="UniProtKB" id="Q5T6V5"/>
    </source>
</evidence>
<evidence type="ECO:0000305" key="3"/>
<proteinExistence type="inferred from homology"/>
<dbReference type="EC" id="3.2.2.-" evidence="2"/>
<dbReference type="EMBL" id="AAFI02000120">
    <property type="protein sequence ID" value="EAL63093.1"/>
    <property type="molecule type" value="Genomic_DNA"/>
</dbReference>
<dbReference type="RefSeq" id="XP_636598.1">
    <property type="nucleotide sequence ID" value="XM_631506.1"/>
</dbReference>
<dbReference type="SMR" id="Q54II8"/>
<dbReference type="FunCoup" id="Q54II8">
    <property type="interactions" value="123"/>
</dbReference>
<dbReference type="PaxDb" id="44689-DDB0266855"/>
<dbReference type="EnsemblProtists" id="EAL63093">
    <property type="protein sequence ID" value="EAL63093"/>
    <property type="gene ID" value="DDB_G0288723"/>
</dbReference>
<dbReference type="GeneID" id="8626773"/>
<dbReference type="KEGG" id="ddi:DDB_G0288723"/>
<dbReference type="dictyBase" id="DDB_G0288723"/>
<dbReference type="VEuPathDB" id="AmoebaDB:DDB_G0288723"/>
<dbReference type="eggNOG" id="KOG2524">
    <property type="taxonomic scope" value="Eukaryota"/>
</dbReference>
<dbReference type="HOGENOM" id="CLU_036001_1_0_1"/>
<dbReference type="InParanoid" id="Q54II8"/>
<dbReference type="OMA" id="FSFWSEE"/>
<dbReference type="PhylomeDB" id="Q54II8"/>
<dbReference type="PRO" id="PR:Q54II8"/>
<dbReference type="Proteomes" id="UP000002195">
    <property type="component" value="Chromosome 5"/>
</dbReference>
<dbReference type="GO" id="GO:0016787">
    <property type="term" value="F:hydrolase activity"/>
    <property type="evidence" value="ECO:0007669"/>
    <property type="project" value="UniProtKB-KW"/>
</dbReference>
<dbReference type="GO" id="GO:0043174">
    <property type="term" value="P:nucleoside salvage"/>
    <property type="evidence" value="ECO:0000250"/>
    <property type="project" value="UniProtKB"/>
</dbReference>
<dbReference type="GO" id="GO:0101030">
    <property type="term" value="P:tRNA-guanine transglycosylation"/>
    <property type="evidence" value="ECO:0000318"/>
    <property type="project" value="GO_Central"/>
</dbReference>
<dbReference type="InterPro" id="IPR019438">
    <property type="entry name" value="Q_salvage"/>
</dbReference>
<dbReference type="PANTHER" id="PTHR21314:SF0">
    <property type="entry name" value="QUEUOSINE 5'-PHOSPHATE N-GLYCOSYLASE_HYDROLASE"/>
    <property type="match status" value="1"/>
</dbReference>
<dbReference type="PANTHER" id="PTHR21314">
    <property type="entry name" value="QUEUOSINE 5'-PHOSPHATE N-GLYCOSYLASE_HYDROLASE-RELATED"/>
    <property type="match status" value="1"/>
</dbReference>
<dbReference type="Pfam" id="PF10343">
    <property type="entry name" value="Q_salvage"/>
    <property type="match status" value="1"/>
</dbReference>
<organism>
    <name type="scientific">Dictyostelium discoideum</name>
    <name type="common">Social amoeba</name>
    <dbReference type="NCBI Taxonomy" id="44689"/>
    <lineage>
        <taxon>Eukaryota</taxon>
        <taxon>Amoebozoa</taxon>
        <taxon>Evosea</taxon>
        <taxon>Eumycetozoa</taxon>
        <taxon>Dictyostelia</taxon>
        <taxon>Dictyosteliales</taxon>
        <taxon>Dictyosteliaceae</taxon>
        <taxon>Dictyostelium</taxon>
    </lineage>
</organism>
<feature type="chain" id="PRO_0000327924" description="Queuosine 5'-phosphate N-glycosylase/hydrolase">
    <location>
        <begin position="1"/>
        <end position="321"/>
    </location>
</feature>
<feature type="active site" description="Nucleophile or transition state stabilizer" evidence="1">
    <location>
        <position position="229"/>
    </location>
</feature>
<feature type="binding site" evidence="2">
    <location>
        <position position="227"/>
    </location>
    <ligand>
        <name>queuine</name>
        <dbReference type="ChEBI" id="CHEBI:17433"/>
    </ligand>
</feature>
<feature type="binding site" evidence="2">
    <location>
        <position position="229"/>
    </location>
    <ligand>
        <name>queuine</name>
        <dbReference type="ChEBI" id="CHEBI:17433"/>
    </ligand>
</feature>
<feature type="binding site" evidence="2">
    <location>
        <position position="296"/>
    </location>
    <ligand>
        <name>queuine</name>
        <dbReference type="ChEBI" id="CHEBI:17433"/>
    </ligand>
</feature>